<keyword id="KW-1185">Reference proteome</keyword>
<feature type="chain" id="PRO_0000210726" description="Putative MgpC-like protein MPN_503">
    <location>
        <begin position="1"/>
        <end position="381"/>
    </location>
</feature>
<feature type="region of interest" description="Disordered" evidence="1">
    <location>
        <begin position="1"/>
        <end position="109"/>
    </location>
</feature>
<feature type="compositionally biased region" description="Polar residues" evidence="1">
    <location>
        <begin position="13"/>
        <end position="31"/>
    </location>
</feature>
<feature type="compositionally biased region" description="Basic and acidic residues" evidence="1">
    <location>
        <begin position="40"/>
        <end position="51"/>
    </location>
</feature>
<feature type="compositionally biased region" description="Basic and acidic residues" evidence="1">
    <location>
        <begin position="61"/>
        <end position="73"/>
    </location>
</feature>
<feature type="compositionally biased region" description="Polar residues" evidence="1">
    <location>
        <begin position="89"/>
        <end position="109"/>
    </location>
</feature>
<sequence>MNGVAQDKVHGLEQTTQWNQQASQKNLTNNPAPKAVTGFKLDKGRAYRKLNEAWPVYEPLDSTKDGKGKDKDGWTTSGASEPKGDAPLVSSTESQMAAVTDSQQSGHNSGLVSLAQRSTTVAVQKSDSSGSQGQGTTDNKFQKYLNTAQALHQMGVIVPSLETWPGKPSTGIATRAGGGVSVQAATRQSSSTNEDLPNVITQLYHTSTSQLAYLNGQIVVMGSNAVPSLWYWVVDERTTSGRATWWAHTELNWGTDKQKQFVENQLGFKDDSNSSLTNFKSQGLTQPAYLIAGLDVVQDHLVFAAFKAGAVGYDMTTDSNASTKDQALAWSTTAGLDSAGGYNKLVENTGGLNGPINELVYPARHLCLCDPGEWDERGESE</sequence>
<gene>
    <name type="ordered locus">MPN_503</name>
    <name type="ORF">MP339</name>
    <name type="ORF">P02_orf381</name>
</gene>
<dbReference type="EMBL" id="U00089">
    <property type="protein sequence ID" value="AAB95987.1"/>
    <property type="molecule type" value="Genomic_DNA"/>
</dbReference>
<dbReference type="PIR" id="S73665">
    <property type="entry name" value="S73665"/>
</dbReference>
<dbReference type="SMR" id="P75283"/>
<dbReference type="STRING" id="272634.MPN_503"/>
<dbReference type="EnsemblBacteria" id="AAB95987">
    <property type="protein sequence ID" value="AAB95987"/>
    <property type="gene ID" value="MPN_503"/>
</dbReference>
<dbReference type="KEGG" id="mpn:MPN_503"/>
<dbReference type="HOGENOM" id="CLU_622302_0_0_14"/>
<dbReference type="Proteomes" id="UP000000808">
    <property type="component" value="Chromosome"/>
</dbReference>
<dbReference type="InterPro" id="IPR007885">
    <property type="entry name" value="MgpC"/>
</dbReference>
<dbReference type="Pfam" id="PF05220">
    <property type="entry name" value="MgpC"/>
    <property type="match status" value="1"/>
</dbReference>
<evidence type="ECO:0000256" key="1">
    <source>
        <dbReference type="SAM" id="MobiDB-lite"/>
    </source>
</evidence>
<evidence type="ECO:0000305" key="2"/>
<reference key="1">
    <citation type="journal article" date="1996" name="Nucleic Acids Res.">
        <title>Complete sequence analysis of the genome of the bacterium Mycoplasma pneumoniae.</title>
        <authorList>
            <person name="Himmelreich R."/>
            <person name="Hilbert H."/>
            <person name="Plagens H."/>
            <person name="Pirkl E."/>
            <person name="Li B.-C."/>
            <person name="Herrmann R."/>
        </authorList>
    </citation>
    <scope>NUCLEOTIDE SEQUENCE [LARGE SCALE GENOMIC DNA]</scope>
    <source>
        <strain>ATCC 29342 / M129 / Subtype 1</strain>
    </source>
</reference>
<proteinExistence type="uncertain"/>
<name>Y503_MYCPN</name>
<comment type="similarity">
    <text evidence="2">Belongs to the MgpC family.</text>
</comment>
<comment type="caution">
    <text evidence="2">Could be the product of a pseudogene.</text>
</comment>
<organism>
    <name type="scientific">Mycoplasma pneumoniae (strain ATCC 29342 / M129 / Subtype 1)</name>
    <name type="common">Mycoplasmoides pneumoniae</name>
    <dbReference type="NCBI Taxonomy" id="272634"/>
    <lineage>
        <taxon>Bacteria</taxon>
        <taxon>Bacillati</taxon>
        <taxon>Mycoplasmatota</taxon>
        <taxon>Mycoplasmoidales</taxon>
        <taxon>Mycoplasmoidaceae</taxon>
        <taxon>Mycoplasmoides</taxon>
    </lineage>
</organism>
<protein>
    <recommendedName>
        <fullName>Putative MgpC-like protein MPN_503</fullName>
    </recommendedName>
</protein>
<accession>P75283</accession>